<proteinExistence type="inferred from homology"/>
<accession>Q9KBQ4</accession>
<dbReference type="EC" id="5.1.3.4" evidence="1"/>
<dbReference type="EMBL" id="BA000004">
    <property type="protein sequence ID" value="BAB05590.1"/>
    <property type="molecule type" value="Genomic_DNA"/>
</dbReference>
<dbReference type="PIR" id="G83883">
    <property type="entry name" value="G83883"/>
</dbReference>
<dbReference type="RefSeq" id="WP_010898032.1">
    <property type="nucleotide sequence ID" value="NC_002570.2"/>
</dbReference>
<dbReference type="SMR" id="Q9KBQ4"/>
<dbReference type="STRING" id="272558.gene:10727769"/>
<dbReference type="KEGG" id="bha:BH1871"/>
<dbReference type="eggNOG" id="COG0235">
    <property type="taxonomic scope" value="Bacteria"/>
</dbReference>
<dbReference type="HOGENOM" id="CLU_006033_5_0_9"/>
<dbReference type="OrthoDB" id="9786287at2"/>
<dbReference type="UniPathway" id="UPA00145">
    <property type="reaction ID" value="UER00567"/>
</dbReference>
<dbReference type="Proteomes" id="UP000001258">
    <property type="component" value="Chromosome"/>
</dbReference>
<dbReference type="GO" id="GO:0005829">
    <property type="term" value="C:cytosol"/>
    <property type="evidence" value="ECO:0007669"/>
    <property type="project" value="TreeGrafter"/>
</dbReference>
<dbReference type="GO" id="GO:0016832">
    <property type="term" value="F:aldehyde-lyase activity"/>
    <property type="evidence" value="ECO:0007669"/>
    <property type="project" value="TreeGrafter"/>
</dbReference>
<dbReference type="GO" id="GO:0008742">
    <property type="term" value="F:L-ribulose-phosphate 4-epimerase activity"/>
    <property type="evidence" value="ECO:0000250"/>
    <property type="project" value="UniProtKB"/>
</dbReference>
<dbReference type="GO" id="GO:0008270">
    <property type="term" value="F:zinc ion binding"/>
    <property type="evidence" value="ECO:0000250"/>
    <property type="project" value="UniProtKB"/>
</dbReference>
<dbReference type="GO" id="GO:0019569">
    <property type="term" value="P:L-arabinose catabolic process to xylulose 5-phosphate"/>
    <property type="evidence" value="ECO:0000250"/>
    <property type="project" value="UniProtKB"/>
</dbReference>
<dbReference type="CDD" id="cd00398">
    <property type="entry name" value="Aldolase_II"/>
    <property type="match status" value="1"/>
</dbReference>
<dbReference type="FunFam" id="3.40.225.10:FF:000001">
    <property type="entry name" value="L-ribulose-5-phosphate 4-epimerase UlaF"/>
    <property type="match status" value="1"/>
</dbReference>
<dbReference type="Gene3D" id="3.40.225.10">
    <property type="entry name" value="Class II aldolase/adducin N-terminal domain"/>
    <property type="match status" value="1"/>
</dbReference>
<dbReference type="InterPro" id="IPR050197">
    <property type="entry name" value="Aldolase_class_II_sugar_metab"/>
</dbReference>
<dbReference type="InterPro" id="IPR001303">
    <property type="entry name" value="Aldolase_II/adducin_N"/>
</dbReference>
<dbReference type="InterPro" id="IPR036409">
    <property type="entry name" value="Aldolase_II/adducin_N_sf"/>
</dbReference>
<dbReference type="InterPro" id="IPR004661">
    <property type="entry name" value="AraD"/>
</dbReference>
<dbReference type="NCBIfam" id="TIGR00760">
    <property type="entry name" value="araD"/>
    <property type="match status" value="1"/>
</dbReference>
<dbReference type="NCBIfam" id="NF006047">
    <property type="entry name" value="PRK08193.1"/>
    <property type="match status" value="1"/>
</dbReference>
<dbReference type="NCBIfam" id="NF009003">
    <property type="entry name" value="PRK12348.1"/>
    <property type="match status" value="1"/>
</dbReference>
<dbReference type="PANTHER" id="PTHR22789">
    <property type="entry name" value="FUCULOSE PHOSPHATE ALDOLASE"/>
    <property type="match status" value="1"/>
</dbReference>
<dbReference type="PANTHER" id="PTHR22789:SF8">
    <property type="entry name" value="L-RIBULOSE-5-PHOSPHATE 4-EPIMERASE SGBE"/>
    <property type="match status" value="1"/>
</dbReference>
<dbReference type="Pfam" id="PF00596">
    <property type="entry name" value="Aldolase_II"/>
    <property type="match status" value="1"/>
</dbReference>
<dbReference type="SMART" id="SM01007">
    <property type="entry name" value="Aldolase_II"/>
    <property type="match status" value="1"/>
</dbReference>
<dbReference type="SUPFAM" id="SSF53639">
    <property type="entry name" value="AraD/HMP-PK domain-like"/>
    <property type="match status" value="1"/>
</dbReference>
<comment type="function">
    <text evidence="1">Involved in the degradation of L-arabinose. Catalyzes the interconversion of L-ribulose 5-phosphate (LRu5P) and D-xylulose 5-phosphate (D-Xu5P) via a retroaldol/aldol mechanism (carbon-carbon bond cleavage analogous to a class II aldolase reaction).</text>
</comment>
<comment type="catalytic activity">
    <reaction evidence="1">
        <text>L-ribulose 5-phosphate = D-xylulose 5-phosphate</text>
        <dbReference type="Rhea" id="RHEA:22368"/>
        <dbReference type="ChEBI" id="CHEBI:57737"/>
        <dbReference type="ChEBI" id="CHEBI:58226"/>
        <dbReference type="EC" id="5.1.3.4"/>
    </reaction>
</comment>
<comment type="cofactor">
    <cofactor evidence="1">
        <name>Zn(2+)</name>
        <dbReference type="ChEBI" id="CHEBI:29105"/>
    </cofactor>
    <text evidence="1">Binds 1 zinc ion per subunit.</text>
</comment>
<comment type="pathway">
    <text evidence="1">Carbohydrate degradation; L-arabinose degradation via L-ribulose; D-xylulose 5-phosphate from L-arabinose (bacterial route): step 3/3.</text>
</comment>
<comment type="similarity">
    <text evidence="1">Belongs to the aldolase class II family. AraD/FucA subfamily.</text>
</comment>
<name>ARAD_HALH5</name>
<gene>
    <name type="primary">araD</name>
    <name type="ordered locus">BH1871</name>
</gene>
<evidence type="ECO:0000250" key="1">
    <source>
        <dbReference type="UniProtKB" id="P08203"/>
    </source>
</evidence>
<evidence type="ECO:0000250" key="2">
    <source>
        <dbReference type="UniProtKB" id="P0AB87"/>
    </source>
</evidence>
<keyword id="KW-0054">Arabinose catabolism</keyword>
<keyword id="KW-0119">Carbohydrate metabolism</keyword>
<keyword id="KW-0413">Isomerase</keyword>
<keyword id="KW-0479">Metal-binding</keyword>
<keyword id="KW-1185">Reference proteome</keyword>
<keyword id="KW-0862">Zinc</keyword>
<reference key="1">
    <citation type="journal article" date="2000" name="Nucleic Acids Res.">
        <title>Complete genome sequence of the alkaliphilic bacterium Bacillus halodurans and genomic sequence comparison with Bacillus subtilis.</title>
        <authorList>
            <person name="Takami H."/>
            <person name="Nakasone K."/>
            <person name="Takaki Y."/>
            <person name="Maeno G."/>
            <person name="Sasaki R."/>
            <person name="Masui N."/>
            <person name="Fuji F."/>
            <person name="Hirama C."/>
            <person name="Nakamura Y."/>
            <person name="Ogasawara N."/>
            <person name="Kuhara S."/>
            <person name="Horikoshi K."/>
        </authorList>
    </citation>
    <scope>NUCLEOTIDE SEQUENCE [LARGE SCALE GENOMIC DNA]</scope>
    <source>
        <strain>ATCC BAA-125 / DSM 18197 / FERM 7344 / JCM 9153 / C-125</strain>
    </source>
</reference>
<organism>
    <name type="scientific">Halalkalibacterium halodurans (strain ATCC BAA-125 / DSM 18197 / FERM 7344 / JCM 9153 / C-125)</name>
    <name type="common">Bacillus halodurans</name>
    <dbReference type="NCBI Taxonomy" id="272558"/>
    <lineage>
        <taxon>Bacteria</taxon>
        <taxon>Bacillati</taxon>
        <taxon>Bacillota</taxon>
        <taxon>Bacilli</taxon>
        <taxon>Bacillales</taxon>
        <taxon>Bacillaceae</taxon>
        <taxon>Halalkalibacterium (ex Joshi et al. 2022)</taxon>
    </lineage>
</organism>
<sequence length="231" mass="25991">MLEQLKETVFKANLYLPKYQLVTFTWGNVSGIDREKGLVVIKPSGVEYFEMKSKDMVVVDLEGNIVEGDLKPSSDTPTHLALYRAFDKVGGIVHTHSVWATAWAQAGKEIPAYGTTHADYFHGTIPCTRPMTETEILGDYEKETGNVIVETFRNKDPMSIPGVLVHSHAPFVWGKDPMEAVHHAVVLEEVAKMAQKTLSISERTLPMDSVLLDRHFYRKHGQAAYYGQEKR</sequence>
<protein>
    <recommendedName>
        <fullName evidence="1">L-ribulose-5-phosphate 4-epimerase</fullName>
        <ecNumber evidence="1">5.1.3.4</ecNumber>
    </recommendedName>
    <alternativeName>
        <fullName evidence="1">Phosphoribulose isomerase</fullName>
    </alternativeName>
</protein>
<feature type="chain" id="PRO_0000162916" description="L-ribulose-5-phosphate 4-epimerase">
    <location>
        <begin position="1"/>
        <end position="231"/>
    </location>
</feature>
<feature type="active site" description="Proton donor/acceptor" evidence="1">
    <location>
        <position position="119"/>
    </location>
</feature>
<feature type="active site" description="Proton donor/acceptor" evidence="1">
    <location>
        <position position="226"/>
    </location>
</feature>
<feature type="binding site" evidence="2">
    <location>
        <begin position="27"/>
        <end position="28"/>
    </location>
    <ligand>
        <name>substrate</name>
    </ligand>
</feature>
<feature type="binding site" evidence="2">
    <location>
        <begin position="44"/>
        <end position="45"/>
    </location>
    <ligand>
        <name>substrate</name>
    </ligand>
</feature>
<feature type="binding site" evidence="2">
    <location>
        <begin position="73"/>
        <end position="74"/>
    </location>
    <ligand>
        <name>substrate</name>
    </ligand>
</feature>
<feature type="binding site" evidence="1">
    <location>
        <position position="75"/>
    </location>
    <ligand>
        <name>Zn(2+)</name>
        <dbReference type="ChEBI" id="CHEBI:29105"/>
    </ligand>
</feature>
<feature type="binding site" evidence="1">
    <location>
        <position position="94"/>
    </location>
    <ligand>
        <name>Zn(2+)</name>
        <dbReference type="ChEBI" id="CHEBI:29105"/>
    </ligand>
</feature>
<feature type="binding site" evidence="1">
    <location>
        <position position="96"/>
    </location>
    <ligand>
        <name>Zn(2+)</name>
        <dbReference type="ChEBI" id="CHEBI:29105"/>
    </ligand>
</feature>
<feature type="binding site" evidence="1">
    <location>
        <position position="168"/>
    </location>
    <ligand>
        <name>Zn(2+)</name>
        <dbReference type="ChEBI" id="CHEBI:29105"/>
    </ligand>
</feature>